<proteinExistence type="inferred from homology"/>
<keyword id="KW-0028">Amino-acid biosynthesis</keyword>
<keyword id="KW-0100">Branched-chain amino acid biosynthesis</keyword>
<keyword id="KW-0460">Magnesium</keyword>
<keyword id="KW-0479">Metal-binding</keyword>
<keyword id="KW-0521">NADP</keyword>
<keyword id="KW-0560">Oxidoreductase</keyword>
<keyword id="KW-1185">Reference proteome</keyword>
<reference key="1">
    <citation type="journal article" date="2010" name="ISME J.">
        <title>The complete genome sequence of the algal symbiont Dinoroseobacter shibae: a hitchhiker's guide to life in the sea.</title>
        <authorList>
            <person name="Wagner-Dobler I."/>
            <person name="Ballhausen B."/>
            <person name="Berger M."/>
            <person name="Brinkhoff T."/>
            <person name="Buchholz I."/>
            <person name="Bunk B."/>
            <person name="Cypionka H."/>
            <person name="Daniel R."/>
            <person name="Drepper T."/>
            <person name="Gerdts G."/>
            <person name="Hahnke S."/>
            <person name="Han C."/>
            <person name="Jahn D."/>
            <person name="Kalhoefer D."/>
            <person name="Kiss H."/>
            <person name="Klenk H.P."/>
            <person name="Kyrpides N."/>
            <person name="Liebl W."/>
            <person name="Liesegang H."/>
            <person name="Meincke L."/>
            <person name="Pati A."/>
            <person name="Petersen J."/>
            <person name="Piekarski T."/>
            <person name="Pommerenke C."/>
            <person name="Pradella S."/>
            <person name="Pukall R."/>
            <person name="Rabus R."/>
            <person name="Stackebrandt E."/>
            <person name="Thole S."/>
            <person name="Thompson L."/>
            <person name="Tielen P."/>
            <person name="Tomasch J."/>
            <person name="von Jan M."/>
            <person name="Wanphrut N."/>
            <person name="Wichels A."/>
            <person name="Zech H."/>
            <person name="Simon M."/>
        </authorList>
    </citation>
    <scope>NUCLEOTIDE SEQUENCE [LARGE SCALE GENOMIC DNA]</scope>
    <source>
        <strain>DSM 16493 / NCIMB 14021 / DFL 12</strain>
    </source>
</reference>
<name>ILVC_DINSH</name>
<sequence>MRVYYDRDCDVNLIKDKKVAILGYGSQGHAHALNLRDSGAKNLVVALREGSASAKKAEAEGLQVMGIAEAAAWCDLIMFTMPDELQAETYKKYVHDNIREGAAIAFAHGLNVHFGLIEPKAGVDVIMMAPKGPGHTVRGEYTKGGGVPCLVAVDTDATGRALEIGLSYCSAIGGGRSGIIETNFREECETDLFGEQAVLCGGLVELIRMGFETLVEAGYAPEMAYFECLHEVKLIVDLIYEGGIANMNYSISNTAEYGEYVSGPRVLPYDETKARMKAILTDIQTGKFVRDFMQENTVGQPFFKGTRRLNDEHQIEAVGKELRGMMPWISAGKLVDQEKN</sequence>
<organism>
    <name type="scientific">Dinoroseobacter shibae (strain DSM 16493 / NCIMB 14021 / DFL 12)</name>
    <dbReference type="NCBI Taxonomy" id="398580"/>
    <lineage>
        <taxon>Bacteria</taxon>
        <taxon>Pseudomonadati</taxon>
        <taxon>Pseudomonadota</taxon>
        <taxon>Alphaproteobacteria</taxon>
        <taxon>Rhodobacterales</taxon>
        <taxon>Roseobacteraceae</taxon>
        <taxon>Dinoroseobacter</taxon>
    </lineage>
</organism>
<dbReference type="EC" id="1.1.1.86" evidence="1"/>
<dbReference type="EMBL" id="CP000830">
    <property type="protein sequence ID" value="ABV94132.1"/>
    <property type="molecule type" value="Genomic_DNA"/>
</dbReference>
<dbReference type="RefSeq" id="WP_012179063.1">
    <property type="nucleotide sequence ID" value="NC_009952.1"/>
</dbReference>
<dbReference type="SMR" id="A8LS39"/>
<dbReference type="STRING" id="398580.Dshi_2396"/>
<dbReference type="KEGG" id="dsh:Dshi_2396"/>
<dbReference type="eggNOG" id="COG0059">
    <property type="taxonomic scope" value="Bacteria"/>
</dbReference>
<dbReference type="HOGENOM" id="CLU_033821_0_1_5"/>
<dbReference type="OrthoDB" id="9804088at2"/>
<dbReference type="UniPathway" id="UPA00047">
    <property type="reaction ID" value="UER00056"/>
</dbReference>
<dbReference type="UniPathway" id="UPA00049">
    <property type="reaction ID" value="UER00060"/>
</dbReference>
<dbReference type="Proteomes" id="UP000006833">
    <property type="component" value="Chromosome"/>
</dbReference>
<dbReference type="GO" id="GO:0005829">
    <property type="term" value="C:cytosol"/>
    <property type="evidence" value="ECO:0007669"/>
    <property type="project" value="TreeGrafter"/>
</dbReference>
<dbReference type="GO" id="GO:0004455">
    <property type="term" value="F:ketol-acid reductoisomerase activity"/>
    <property type="evidence" value="ECO:0007669"/>
    <property type="project" value="UniProtKB-UniRule"/>
</dbReference>
<dbReference type="GO" id="GO:0000287">
    <property type="term" value="F:magnesium ion binding"/>
    <property type="evidence" value="ECO:0007669"/>
    <property type="project" value="UniProtKB-UniRule"/>
</dbReference>
<dbReference type="GO" id="GO:0050661">
    <property type="term" value="F:NADP binding"/>
    <property type="evidence" value="ECO:0007669"/>
    <property type="project" value="InterPro"/>
</dbReference>
<dbReference type="GO" id="GO:0009097">
    <property type="term" value="P:isoleucine biosynthetic process"/>
    <property type="evidence" value="ECO:0007669"/>
    <property type="project" value="UniProtKB-UniRule"/>
</dbReference>
<dbReference type="GO" id="GO:0009099">
    <property type="term" value="P:L-valine biosynthetic process"/>
    <property type="evidence" value="ECO:0007669"/>
    <property type="project" value="UniProtKB-UniRule"/>
</dbReference>
<dbReference type="FunFam" id="3.40.50.720:FF:000023">
    <property type="entry name" value="Ketol-acid reductoisomerase (NADP(+))"/>
    <property type="match status" value="1"/>
</dbReference>
<dbReference type="Gene3D" id="6.10.240.10">
    <property type="match status" value="1"/>
</dbReference>
<dbReference type="Gene3D" id="3.40.50.720">
    <property type="entry name" value="NAD(P)-binding Rossmann-like Domain"/>
    <property type="match status" value="1"/>
</dbReference>
<dbReference type="HAMAP" id="MF_00435">
    <property type="entry name" value="IlvC"/>
    <property type="match status" value="1"/>
</dbReference>
<dbReference type="InterPro" id="IPR008927">
    <property type="entry name" value="6-PGluconate_DH-like_C_sf"/>
</dbReference>
<dbReference type="InterPro" id="IPR013023">
    <property type="entry name" value="KARI"/>
</dbReference>
<dbReference type="InterPro" id="IPR000506">
    <property type="entry name" value="KARI_C"/>
</dbReference>
<dbReference type="InterPro" id="IPR013116">
    <property type="entry name" value="KARI_N"/>
</dbReference>
<dbReference type="InterPro" id="IPR014359">
    <property type="entry name" value="KARI_prok"/>
</dbReference>
<dbReference type="InterPro" id="IPR036291">
    <property type="entry name" value="NAD(P)-bd_dom_sf"/>
</dbReference>
<dbReference type="NCBIfam" id="TIGR00465">
    <property type="entry name" value="ilvC"/>
    <property type="match status" value="1"/>
</dbReference>
<dbReference type="NCBIfam" id="NF004017">
    <property type="entry name" value="PRK05479.1"/>
    <property type="match status" value="1"/>
</dbReference>
<dbReference type="NCBIfam" id="NF009940">
    <property type="entry name" value="PRK13403.1"/>
    <property type="match status" value="1"/>
</dbReference>
<dbReference type="PANTHER" id="PTHR21371">
    <property type="entry name" value="KETOL-ACID REDUCTOISOMERASE, MITOCHONDRIAL"/>
    <property type="match status" value="1"/>
</dbReference>
<dbReference type="PANTHER" id="PTHR21371:SF1">
    <property type="entry name" value="KETOL-ACID REDUCTOISOMERASE, MITOCHONDRIAL"/>
    <property type="match status" value="1"/>
</dbReference>
<dbReference type="Pfam" id="PF01450">
    <property type="entry name" value="KARI_C"/>
    <property type="match status" value="1"/>
</dbReference>
<dbReference type="Pfam" id="PF07991">
    <property type="entry name" value="KARI_N"/>
    <property type="match status" value="1"/>
</dbReference>
<dbReference type="PIRSF" id="PIRSF000116">
    <property type="entry name" value="IlvC_gammaproteo"/>
    <property type="match status" value="1"/>
</dbReference>
<dbReference type="SUPFAM" id="SSF48179">
    <property type="entry name" value="6-phosphogluconate dehydrogenase C-terminal domain-like"/>
    <property type="match status" value="1"/>
</dbReference>
<dbReference type="SUPFAM" id="SSF51735">
    <property type="entry name" value="NAD(P)-binding Rossmann-fold domains"/>
    <property type="match status" value="1"/>
</dbReference>
<dbReference type="PROSITE" id="PS51851">
    <property type="entry name" value="KARI_C"/>
    <property type="match status" value="1"/>
</dbReference>
<dbReference type="PROSITE" id="PS51850">
    <property type="entry name" value="KARI_N"/>
    <property type="match status" value="1"/>
</dbReference>
<evidence type="ECO:0000255" key="1">
    <source>
        <dbReference type="HAMAP-Rule" id="MF_00435"/>
    </source>
</evidence>
<evidence type="ECO:0000255" key="2">
    <source>
        <dbReference type="PROSITE-ProRule" id="PRU01197"/>
    </source>
</evidence>
<evidence type="ECO:0000255" key="3">
    <source>
        <dbReference type="PROSITE-ProRule" id="PRU01198"/>
    </source>
</evidence>
<accession>A8LS39</accession>
<protein>
    <recommendedName>
        <fullName evidence="1">Ketol-acid reductoisomerase (NADP(+))</fullName>
        <shortName evidence="1">KARI</shortName>
        <ecNumber evidence="1">1.1.1.86</ecNumber>
    </recommendedName>
    <alternativeName>
        <fullName evidence="1">Acetohydroxy-acid isomeroreductase</fullName>
        <shortName evidence="1">AHIR</shortName>
    </alternativeName>
    <alternativeName>
        <fullName evidence="1">Alpha-keto-beta-hydroxylacyl reductoisomerase</fullName>
    </alternativeName>
    <alternativeName>
        <fullName evidence="1">Ketol-acid reductoisomerase type 1</fullName>
    </alternativeName>
    <alternativeName>
        <fullName evidence="1">Ketol-acid reductoisomerase type I</fullName>
    </alternativeName>
</protein>
<feature type="chain" id="PRO_1000080627" description="Ketol-acid reductoisomerase (NADP(+))">
    <location>
        <begin position="1"/>
        <end position="340"/>
    </location>
</feature>
<feature type="domain" description="KARI N-terminal Rossmann" evidence="2">
    <location>
        <begin position="1"/>
        <end position="182"/>
    </location>
</feature>
<feature type="domain" description="KARI C-terminal knotted" evidence="3">
    <location>
        <begin position="183"/>
        <end position="329"/>
    </location>
</feature>
<feature type="active site" evidence="1">
    <location>
        <position position="108"/>
    </location>
</feature>
<feature type="binding site" evidence="1">
    <location>
        <begin position="24"/>
        <end position="27"/>
    </location>
    <ligand>
        <name>NADP(+)</name>
        <dbReference type="ChEBI" id="CHEBI:58349"/>
    </ligand>
</feature>
<feature type="binding site" evidence="1">
    <location>
        <position position="48"/>
    </location>
    <ligand>
        <name>NADP(+)</name>
        <dbReference type="ChEBI" id="CHEBI:58349"/>
    </ligand>
</feature>
<feature type="binding site" evidence="1">
    <location>
        <position position="51"/>
    </location>
    <ligand>
        <name>NADP(+)</name>
        <dbReference type="ChEBI" id="CHEBI:58349"/>
    </ligand>
</feature>
<feature type="binding site" evidence="1">
    <location>
        <position position="53"/>
    </location>
    <ligand>
        <name>NADP(+)</name>
        <dbReference type="ChEBI" id="CHEBI:58349"/>
    </ligand>
</feature>
<feature type="binding site" evidence="1">
    <location>
        <begin position="83"/>
        <end position="86"/>
    </location>
    <ligand>
        <name>NADP(+)</name>
        <dbReference type="ChEBI" id="CHEBI:58349"/>
    </ligand>
</feature>
<feature type="binding site" evidence="1">
    <location>
        <position position="134"/>
    </location>
    <ligand>
        <name>NADP(+)</name>
        <dbReference type="ChEBI" id="CHEBI:58349"/>
    </ligand>
</feature>
<feature type="binding site" evidence="1">
    <location>
        <position position="191"/>
    </location>
    <ligand>
        <name>Mg(2+)</name>
        <dbReference type="ChEBI" id="CHEBI:18420"/>
        <label>1</label>
    </ligand>
</feature>
<feature type="binding site" evidence="1">
    <location>
        <position position="191"/>
    </location>
    <ligand>
        <name>Mg(2+)</name>
        <dbReference type="ChEBI" id="CHEBI:18420"/>
        <label>2</label>
    </ligand>
</feature>
<feature type="binding site" evidence="1">
    <location>
        <position position="195"/>
    </location>
    <ligand>
        <name>Mg(2+)</name>
        <dbReference type="ChEBI" id="CHEBI:18420"/>
        <label>1</label>
    </ligand>
</feature>
<feature type="binding site" evidence="1">
    <location>
        <position position="227"/>
    </location>
    <ligand>
        <name>Mg(2+)</name>
        <dbReference type="ChEBI" id="CHEBI:18420"/>
        <label>2</label>
    </ligand>
</feature>
<feature type="binding site" evidence="1">
    <location>
        <position position="231"/>
    </location>
    <ligand>
        <name>Mg(2+)</name>
        <dbReference type="ChEBI" id="CHEBI:18420"/>
        <label>2</label>
    </ligand>
</feature>
<feature type="binding site" evidence="1">
    <location>
        <position position="252"/>
    </location>
    <ligand>
        <name>substrate</name>
    </ligand>
</feature>
<comment type="function">
    <text evidence="1">Involved in the biosynthesis of branched-chain amino acids (BCAA). Catalyzes an alkyl-migration followed by a ketol-acid reduction of (S)-2-acetolactate (S2AL) to yield (R)-2,3-dihydroxy-isovalerate. In the isomerase reaction, S2AL is rearranged via a Mg-dependent methyl migration to produce 3-hydroxy-3-methyl-2-ketobutyrate (HMKB). In the reductase reaction, this 2-ketoacid undergoes a metal-dependent reduction by NADPH to yield (R)-2,3-dihydroxy-isovalerate.</text>
</comment>
<comment type="catalytic activity">
    <reaction evidence="1">
        <text>(2R)-2,3-dihydroxy-3-methylbutanoate + NADP(+) = (2S)-2-acetolactate + NADPH + H(+)</text>
        <dbReference type="Rhea" id="RHEA:22068"/>
        <dbReference type="ChEBI" id="CHEBI:15378"/>
        <dbReference type="ChEBI" id="CHEBI:49072"/>
        <dbReference type="ChEBI" id="CHEBI:57783"/>
        <dbReference type="ChEBI" id="CHEBI:58349"/>
        <dbReference type="ChEBI" id="CHEBI:58476"/>
        <dbReference type="EC" id="1.1.1.86"/>
    </reaction>
</comment>
<comment type="catalytic activity">
    <reaction evidence="1">
        <text>(2R,3R)-2,3-dihydroxy-3-methylpentanoate + NADP(+) = (S)-2-ethyl-2-hydroxy-3-oxobutanoate + NADPH + H(+)</text>
        <dbReference type="Rhea" id="RHEA:13493"/>
        <dbReference type="ChEBI" id="CHEBI:15378"/>
        <dbReference type="ChEBI" id="CHEBI:49256"/>
        <dbReference type="ChEBI" id="CHEBI:49258"/>
        <dbReference type="ChEBI" id="CHEBI:57783"/>
        <dbReference type="ChEBI" id="CHEBI:58349"/>
        <dbReference type="EC" id="1.1.1.86"/>
    </reaction>
</comment>
<comment type="cofactor">
    <cofactor evidence="1">
        <name>Mg(2+)</name>
        <dbReference type="ChEBI" id="CHEBI:18420"/>
    </cofactor>
    <text evidence="1">Binds 2 magnesium ions per subunit.</text>
</comment>
<comment type="pathway">
    <text evidence="1">Amino-acid biosynthesis; L-isoleucine biosynthesis; L-isoleucine from 2-oxobutanoate: step 2/4.</text>
</comment>
<comment type="pathway">
    <text evidence="1">Amino-acid biosynthesis; L-valine biosynthesis; L-valine from pyruvate: step 2/4.</text>
</comment>
<comment type="similarity">
    <text evidence="1">Belongs to the ketol-acid reductoisomerase family.</text>
</comment>
<gene>
    <name evidence="1" type="primary">ilvC</name>
    <name type="ordered locus">Dshi_2396</name>
</gene>